<accession>A5F8P0</accession>
<accession>C3M4M7</accession>
<protein>
    <recommendedName>
        <fullName evidence="1">Large ribosomal subunit protein bL21</fullName>
    </recommendedName>
    <alternativeName>
        <fullName evidence="2">50S ribosomal protein L21</fullName>
    </alternativeName>
</protein>
<dbReference type="EMBL" id="CP000627">
    <property type="protein sequence ID" value="ABQ21812.1"/>
    <property type="molecule type" value="Genomic_DNA"/>
</dbReference>
<dbReference type="EMBL" id="CP001235">
    <property type="protein sequence ID" value="ACP08499.1"/>
    <property type="molecule type" value="Genomic_DNA"/>
</dbReference>
<dbReference type="RefSeq" id="WP_000271393.1">
    <property type="nucleotide sequence ID" value="NZ_JAACZH010000015.1"/>
</dbReference>
<dbReference type="SMR" id="A5F8P0"/>
<dbReference type="GeneID" id="95679033"/>
<dbReference type="KEGG" id="vco:VC0395_A2853"/>
<dbReference type="KEGG" id="vcr:VC395_0479"/>
<dbReference type="PATRIC" id="fig|345073.21.peg.466"/>
<dbReference type="eggNOG" id="COG0261">
    <property type="taxonomic scope" value="Bacteria"/>
</dbReference>
<dbReference type="HOGENOM" id="CLU_061463_3_3_6"/>
<dbReference type="OrthoDB" id="9813334at2"/>
<dbReference type="Proteomes" id="UP000000249">
    <property type="component" value="Chromosome 2"/>
</dbReference>
<dbReference type="GO" id="GO:0005737">
    <property type="term" value="C:cytoplasm"/>
    <property type="evidence" value="ECO:0007669"/>
    <property type="project" value="UniProtKB-ARBA"/>
</dbReference>
<dbReference type="GO" id="GO:1990904">
    <property type="term" value="C:ribonucleoprotein complex"/>
    <property type="evidence" value="ECO:0007669"/>
    <property type="project" value="UniProtKB-KW"/>
</dbReference>
<dbReference type="GO" id="GO:0005840">
    <property type="term" value="C:ribosome"/>
    <property type="evidence" value="ECO:0007669"/>
    <property type="project" value="UniProtKB-KW"/>
</dbReference>
<dbReference type="GO" id="GO:0019843">
    <property type="term" value="F:rRNA binding"/>
    <property type="evidence" value="ECO:0007669"/>
    <property type="project" value="UniProtKB-UniRule"/>
</dbReference>
<dbReference type="GO" id="GO:0003735">
    <property type="term" value="F:structural constituent of ribosome"/>
    <property type="evidence" value="ECO:0007669"/>
    <property type="project" value="InterPro"/>
</dbReference>
<dbReference type="GO" id="GO:0006412">
    <property type="term" value="P:translation"/>
    <property type="evidence" value="ECO:0007669"/>
    <property type="project" value="UniProtKB-UniRule"/>
</dbReference>
<dbReference type="HAMAP" id="MF_01363">
    <property type="entry name" value="Ribosomal_bL21"/>
    <property type="match status" value="1"/>
</dbReference>
<dbReference type="InterPro" id="IPR028909">
    <property type="entry name" value="bL21-like"/>
</dbReference>
<dbReference type="InterPro" id="IPR036164">
    <property type="entry name" value="bL21-like_sf"/>
</dbReference>
<dbReference type="InterPro" id="IPR001787">
    <property type="entry name" value="Ribosomal_bL21"/>
</dbReference>
<dbReference type="InterPro" id="IPR018258">
    <property type="entry name" value="Ribosomal_bL21_CS"/>
</dbReference>
<dbReference type="NCBIfam" id="TIGR00061">
    <property type="entry name" value="L21"/>
    <property type="match status" value="1"/>
</dbReference>
<dbReference type="PANTHER" id="PTHR21349">
    <property type="entry name" value="50S RIBOSOMAL PROTEIN L21"/>
    <property type="match status" value="1"/>
</dbReference>
<dbReference type="PANTHER" id="PTHR21349:SF0">
    <property type="entry name" value="LARGE RIBOSOMAL SUBUNIT PROTEIN BL21M"/>
    <property type="match status" value="1"/>
</dbReference>
<dbReference type="Pfam" id="PF00829">
    <property type="entry name" value="Ribosomal_L21p"/>
    <property type="match status" value="1"/>
</dbReference>
<dbReference type="SUPFAM" id="SSF141091">
    <property type="entry name" value="L21p-like"/>
    <property type="match status" value="1"/>
</dbReference>
<dbReference type="PROSITE" id="PS01169">
    <property type="entry name" value="RIBOSOMAL_L21"/>
    <property type="match status" value="1"/>
</dbReference>
<reference key="1">
    <citation type="submission" date="2007-03" db="EMBL/GenBank/DDBJ databases">
        <authorList>
            <person name="Heidelberg J."/>
        </authorList>
    </citation>
    <scope>NUCLEOTIDE SEQUENCE [LARGE SCALE GENOMIC DNA]</scope>
    <source>
        <strain>ATCC 39541 / Classical Ogawa 395 / O395</strain>
    </source>
</reference>
<reference key="2">
    <citation type="journal article" date="2008" name="PLoS ONE">
        <title>A recalibrated molecular clock and independent origins for the cholera pandemic clones.</title>
        <authorList>
            <person name="Feng L."/>
            <person name="Reeves P.R."/>
            <person name="Lan R."/>
            <person name="Ren Y."/>
            <person name="Gao C."/>
            <person name="Zhou Z."/>
            <person name="Ren Y."/>
            <person name="Cheng J."/>
            <person name="Wang W."/>
            <person name="Wang J."/>
            <person name="Qian W."/>
            <person name="Li D."/>
            <person name="Wang L."/>
        </authorList>
    </citation>
    <scope>NUCLEOTIDE SEQUENCE [LARGE SCALE GENOMIC DNA]</scope>
    <source>
        <strain>ATCC 39541 / Classical Ogawa 395 / O395</strain>
    </source>
</reference>
<evidence type="ECO:0000255" key="1">
    <source>
        <dbReference type="HAMAP-Rule" id="MF_01363"/>
    </source>
</evidence>
<evidence type="ECO:0000305" key="2"/>
<gene>
    <name evidence="1" type="primary">rplU</name>
    <name type="ordered locus">VC0395_A2853</name>
    <name type="ordered locus">VC395_0479</name>
</gene>
<comment type="function">
    <text evidence="1">This protein binds to 23S rRNA in the presence of protein L20.</text>
</comment>
<comment type="subunit">
    <text evidence="1">Part of the 50S ribosomal subunit. Contacts protein L20.</text>
</comment>
<comment type="similarity">
    <text evidence="1">Belongs to the bacterial ribosomal protein bL21 family.</text>
</comment>
<name>RL21_VIBC3</name>
<proteinExistence type="inferred from homology"/>
<feature type="chain" id="PRO_1000073393" description="Large ribosomal subunit protein bL21">
    <location>
        <begin position="1"/>
        <end position="103"/>
    </location>
</feature>
<organism>
    <name type="scientific">Vibrio cholerae serotype O1 (strain ATCC 39541 / Classical Ogawa 395 / O395)</name>
    <dbReference type="NCBI Taxonomy" id="345073"/>
    <lineage>
        <taxon>Bacteria</taxon>
        <taxon>Pseudomonadati</taxon>
        <taxon>Pseudomonadota</taxon>
        <taxon>Gammaproteobacteria</taxon>
        <taxon>Vibrionales</taxon>
        <taxon>Vibrionaceae</taxon>
        <taxon>Vibrio</taxon>
    </lineage>
</organism>
<keyword id="KW-0687">Ribonucleoprotein</keyword>
<keyword id="KW-0689">Ribosomal protein</keyword>
<keyword id="KW-0694">RNA-binding</keyword>
<keyword id="KW-0699">rRNA-binding</keyword>
<sequence length="103" mass="11507">MYAVFQSGGKQHRVSEGQTLRLEKLDVETGATVEFDKVLLVANGEDIKVGAPLVEGGKVVAEVVQHGRGDKVKIVKFRRRKHSRKQQGHRQWFTEVKITGINA</sequence>